<keyword id="KW-0067">ATP-binding</keyword>
<keyword id="KW-0997">Cell inner membrane</keyword>
<keyword id="KW-1003">Cell membrane</keyword>
<keyword id="KW-0472">Membrane</keyword>
<keyword id="KW-0547">Nucleotide-binding</keyword>
<keyword id="KW-0571">Peptide transport</keyword>
<keyword id="KW-0653">Protein transport</keyword>
<keyword id="KW-1278">Translocase</keyword>
<keyword id="KW-0813">Transport</keyword>
<name>Y3096_BRUAB</name>
<feature type="chain" id="PRO_0000328693" description="Putative peptide import ATP-binding protein BruAb2_0796">
    <location>
        <begin position="1"/>
        <end position="338"/>
    </location>
</feature>
<feature type="domain" description="ABC transporter" evidence="2">
    <location>
        <begin position="7"/>
        <end position="263"/>
    </location>
</feature>
<feature type="binding site" evidence="2">
    <location>
        <begin position="43"/>
        <end position="50"/>
    </location>
    <ligand>
        <name>ATP</name>
        <dbReference type="ChEBI" id="CHEBI:30616"/>
    </ligand>
</feature>
<gene>
    <name type="ordered locus">BruAb2_0796</name>
</gene>
<protein>
    <recommendedName>
        <fullName>Putative peptide import ATP-binding protein BruAb2_0796</fullName>
        <ecNumber>7.4.2.-</ecNumber>
    </recommendedName>
</protein>
<proteinExistence type="inferred from homology"/>
<sequence length="338" mass="36751">MSRQPILDIEGLRTVFRTRAREIVAVNDVDIVVNPGETVALVGESGSGKSVTSLSIMRLLARKVGFIDAGSIILRGKSGQTVDLAAIDEEAMRRIRGNDIGMVFQEPMTSLNPVYTIGDQIGEPLRVHRGTSRREALEAAVELLDRVGIPDARRRAGQYPHELSGGMRQRATIAMALICNPTFLIADEPTTALDVTIQAQILDLMQKLQSESGMGMLFVTHNLGVVAEIAQRVVVMYAGRIVESGPVKEVFRNPRHPYTMGLLRSMPRLGDATEMKRRGEKLNTIPGMVPGLANLPSGCAFAPRCSFAVEACHAAVPPLASVNEHHGSRCIRWQEIAA</sequence>
<evidence type="ECO:0000250" key="1"/>
<evidence type="ECO:0000255" key="2">
    <source>
        <dbReference type="PROSITE-ProRule" id="PRU00434"/>
    </source>
</evidence>
<evidence type="ECO:0000305" key="3"/>
<organism>
    <name type="scientific">Brucella abortus biovar 1 (strain 9-941)</name>
    <dbReference type="NCBI Taxonomy" id="262698"/>
    <lineage>
        <taxon>Bacteria</taxon>
        <taxon>Pseudomonadati</taxon>
        <taxon>Pseudomonadota</taxon>
        <taxon>Alphaproteobacteria</taxon>
        <taxon>Hyphomicrobiales</taxon>
        <taxon>Brucellaceae</taxon>
        <taxon>Brucella/Ochrobactrum group</taxon>
        <taxon>Brucella</taxon>
    </lineage>
</organism>
<reference key="1">
    <citation type="journal article" date="2005" name="J. Bacteriol.">
        <title>Completion of the genome sequence of Brucella abortus and comparison to the highly similar genomes of Brucella melitensis and Brucella suis.</title>
        <authorList>
            <person name="Halling S.M."/>
            <person name="Peterson-Burch B.D."/>
            <person name="Bricker B.J."/>
            <person name="Zuerner R.L."/>
            <person name="Qing Z."/>
            <person name="Li L.-L."/>
            <person name="Kapur V."/>
            <person name="Alt D.P."/>
            <person name="Olsen S.C."/>
        </authorList>
    </citation>
    <scope>NUCLEOTIDE SEQUENCE [LARGE SCALE GENOMIC DNA]</scope>
    <source>
        <strain>9-941</strain>
    </source>
</reference>
<accession>Q577J5</accession>
<comment type="function">
    <text evidence="1">Probably part of an ABC transporter complex that could be involved in peptide import. Probably responsible for energy coupling to the transport system (By similarity).</text>
</comment>
<comment type="subunit">
    <text evidence="3">The complex is composed of two ATP-binding proteins (BruAb2_0796 and BruAb2_0797), two transmembrane proteins (BruAb2_0794) and a solute-binding protein (BruAb2_0792).</text>
</comment>
<comment type="subcellular location">
    <subcellularLocation>
        <location evidence="3">Cell inner membrane</location>
        <topology evidence="3">Peripheral membrane protein</topology>
    </subcellularLocation>
</comment>
<comment type="similarity">
    <text evidence="3">Belongs to the ABC transporter superfamily.</text>
</comment>
<dbReference type="EC" id="7.4.2.-"/>
<dbReference type="EMBL" id="AE017224">
    <property type="protein sequence ID" value="AAX76189.1"/>
    <property type="molecule type" value="Genomic_DNA"/>
</dbReference>
<dbReference type="RefSeq" id="WP_002967326.1">
    <property type="nucleotide sequence ID" value="NC_006933.1"/>
</dbReference>
<dbReference type="SMR" id="Q577J5"/>
<dbReference type="EnsemblBacteria" id="AAX76189">
    <property type="protein sequence ID" value="AAX76189"/>
    <property type="gene ID" value="BruAb2_0796"/>
</dbReference>
<dbReference type="KEGG" id="bmb:BruAb2_0796"/>
<dbReference type="HOGENOM" id="CLU_000604_1_23_5"/>
<dbReference type="Proteomes" id="UP000000540">
    <property type="component" value="Chromosome II"/>
</dbReference>
<dbReference type="GO" id="GO:0005886">
    <property type="term" value="C:plasma membrane"/>
    <property type="evidence" value="ECO:0007669"/>
    <property type="project" value="UniProtKB-SubCell"/>
</dbReference>
<dbReference type="GO" id="GO:0005524">
    <property type="term" value="F:ATP binding"/>
    <property type="evidence" value="ECO:0007669"/>
    <property type="project" value="UniProtKB-KW"/>
</dbReference>
<dbReference type="GO" id="GO:0016887">
    <property type="term" value="F:ATP hydrolysis activity"/>
    <property type="evidence" value="ECO:0007669"/>
    <property type="project" value="InterPro"/>
</dbReference>
<dbReference type="GO" id="GO:0015833">
    <property type="term" value="P:peptide transport"/>
    <property type="evidence" value="ECO:0007669"/>
    <property type="project" value="UniProtKB-KW"/>
</dbReference>
<dbReference type="GO" id="GO:0015031">
    <property type="term" value="P:protein transport"/>
    <property type="evidence" value="ECO:0007669"/>
    <property type="project" value="UniProtKB-KW"/>
</dbReference>
<dbReference type="CDD" id="cd03257">
    <property type="entry name" value="ABC_NikE_OppD_transporters"/>
    <property type="match status" value="1"/>
</dbReference>
<dbReference type="FunFam" id="3.40.50.300:FF:000016">
    <property type="entry name" value="Oligopeptide ABC transporter ATP-binding component"/>
    <property type="match status" value="1"/>
</dbReference>
<dbReference type="Gene3D" id="3.40.50.300">
    <property type="entry name" value="P-loop containing nucleotide triphosphate hydrolases"/>
    <property type="match status" value="1"/>
</dbReference>
<dbReference type="InterPro" id="IPR003593">
    <property type="entry name" value="AAA+_ATPase"/>
</dbReference>
<dbReference type="InterPro" id="IPR050388">
    <property type="entry name" value="ABC_Ni/Peptide_Import"/>
</dbReference>
<dbReference type="InterPro" id="IPR003439">
    <property type="entry name" value="ABC_transporter-like_ATP-bd"/>
</dbReference>
<dbReference type="InterPro" id="IPR017871">
    <property type="entry name" value="ABC_transporter-like_CS"/>
</dbReference>
<dbReference type="InterPro" id="IPR013563">
    <property type="entry name" value="Oligopep_ABC_C"/>
</dbReference>
<dbReference type="InterPro" id="IPR027417">
    <property type="entry name" value="P-loop_NTPase"/>
</dbReference>
<dbReference type="NCBIfam" id="TIGR01727">
    <property type="entry name" value="oligo_HPY"/>
    <property type="match status" value="1"/>
</dbReference>
<dbReference type="PANTHER" id="PTHR43297:SF14">
    <property type="entry name" value="ATPASE AAA-TYPE CORE DOMAIN-CONTAINING PROTEIN"/>
    <property type="match status" value="1"/>
</dbReference>
<dbReference type="PANTHER" id="PTHR43297">
    <property type="entry name" value="OLIGOPEPTIDE TRANSPORT ATP-BINDING PROTEIN APPD"/>
    <property type="match status" value="1"/>
</dbReference>
<dbReference type="Pfam" id="PF00005">
    <property type="entry name" value="ABC_tran"/>
    <property type="match status" value="1"/>
</dbReference>
<dbReference type="Pfam" id="PF08352">
    <property type="entry name" value="oligo_HPY"/>
    <property type="match status" value="1"/>
</dbReference>
<dbReference type="SMART" id="SM00382">
    <property type="entry name" value="AAA"/>
    <property type="match status" value="1"/>
</dbReference>
<dbReference type="SUPFAM" id="SSF52540">
    <property type="entry name" value="P-loop containing nucleoside triphosphate hydrolases"/>
    <property type="match status" value="1"/>
</dbReference>
<dbReference type="PROSITE" id="PS00211">
    <property type="entry name" value="ABC_TRANSPORTER_1"/>
    <property type="match status" value="1"/>
</dbReference>
<dbReference type="PROSITE" id="PS50893">
    <property type="entry name" value="ABC_TRANSPORTER_2"/>
    <property type="match status" value="1"/>
</dbReference>